<organism>
    <name type="scientific">Pyrococcus furiosus (strain ATCC 43587 / DSM 3638 / JCM 8422 / Vc1)</name>
    <dbReference type="NCBI Taxonomy" id="186497"/>
    <lineage>
        <taxon>Archaea</taxon>
        <taxon>Methanobacteriati</taxon>
        <taxon>Methanobacteriota</taxon>
        <taxon>Thermococci</taxon>
        <taxon>Thermococcales</taxon>
        <taxon>Thermococcaceae</taxon>
        <taxon>Pyrococcus</taxon>
    </lineage>
</organism>
<dbReference type="EMBL" id="AE009950">
    <property type="protein sequence ID" value="AAL80476.1"/>
    <property type="molecule type" value="Genomic_DNA"/>
</dbReference>
<dbReference type="RefSeq" id="WP_048059033.1">
    <property type="nucleotide sequence ID" value="NC_003413.1"/>
</dbReference>
<dbReference type="SMR" id="Q8U3V3"/>
<dbReference type="IntAct" id="Q8U3V3">
    <property type="interactions" value="1"/>
</dbReference>
<dbReference type="STRING" id="186497.PF0352"/>
<dbReference type="PaxDb" id="186497-PF0352"/>
<dbReference type="GeneID" id="1468187"/>
<dbReference type="KEGG" id="pfu:PF0352"/>
<dbReference type="PATRIC" id="fig|186497.12.peg.365"/>
<dbReference type="eggNOG" id="arCOG03891">
    <property type="taxonomic scope" value="Archaea"/>
</dbReference>
<dbReference type="HOGENOM" id="CLU_1444720_0_0_2"/>
<dbReference type="OrthoDB" id="102565at2157"/>
<dbReference type="Proteomes" id="UP000001013">
    <property type="component" value="Chromosome"/>
</dbReference>
<dbReference type="GO" id="GO:0005737">
    <property type="term" value="C:cytoplasm"/>
    <property type="evidence" value="ECO:0007669"/>
    <property type="project" value="UniProtKB-SubCell"/>
</dbReference>
<dbReference type="GO" id="GO:0051607">
    <property type="term" value="P:defense response to virus"/>
    <property type="evidence" value="ECO:0007669"/>
    <property type="project" value="UniProtKB-KW"/>
</dbReference>
<dbReference type="CDD" id="cd09657">
    <property type="entry name" value="Cmr1_III-B"/>
    <property type="match status" value="1"/>
</dbReference>
<dbReference type="InterPro" id="IPR007522">
    <property type="entry name" value="CRISPR-assoc_prot_TM1795"/>
</dbReference>
<dbReference type="InterPro" id="IPR005537">
    <property type="entry name" value="RAMP_III_fam"/>
</dbReference>
<dbReference type="NCBIfam" id="TIGR01894">
    <property type="entry name" value="cas_TM1795_cmr1"/>
    <property type="match status" value="1"/>
</dbReference>
<dbReference type="Pfam" id="PF03787">
    <property type="entry name" value="RAMPs"/>
    <property type="match status" value="1"/>
</dbReference>
<name>CMR1B_PYRFU</name>
<comment type="function">
    <text evidence="1 2">CRISPR (clustered regularly interspaced short palindromic repeat), is an adaptive immune system that provides protection against mobile genetic elements (viruses, transposable elements and conjugative plasmids). CRISPR clusters contain sequences complementary to antecedent mobile elements and target invading nucleic acids. CRISPR clusters are transcribed and processed into CRISPR RNA (crRNA), formerly called psiRNA (prokaryotic silencing) in this organism. Part of the Cmr ribonucleoprotein complex which has divalent cation-dependent endoribonuclease activity specific for ssRNA complementary to the crRNA (target RNA), generating 5' hydroxy- and 3' phosphate or 2'-3' cyclic phosphate termini (PubMed:19945378). Cmr4 is probably the subunit that cleaves target RNA. Cmr complex does not cleave ssDNA complementary to the crRNA. Cleavage of invading RNA is guided by the crRNA; substrate cleavage occurs a fixed distance (14 nt) from the 3' end of the crRNA. In vitro reconstitution shows Cmr1-2 and Cmr5 are not absolutely necessary for target cleavage.</text>
</comment>
<comment type="subunit">
    <text evidence="1 2">Part of the type III-B Cmr ribonucleoprotein (RNP) complex (PubMed:19945378). This is an elongated RNP with Cmr2 and Cmr3 as the base, with Cmr4 and Cmr5 forming a helical core along the mature crRNA (39 or 45 nt in length), while the complex is capped by Cmr6 and Cmr1. The 5' end of the crRNA is bound to Cmr2 and Cmr3, while Cmr6 and a Cmr1 subunit (Cmr1-1 or Cmr1-2) cap the 3' end of the crRNA. The target RNA lies antiparallel to the crRNA, with its 5' end near Cmr1 and Cmr6 and its 3' end near Cmr2 and Cmr3; major target cleavage occurs nears the junction of Cmr1/Cmr6 and Cmr4/Cmr, with minor cleavage occurring at 6 nt intervals which coincide with the proposed spacing of Cmr4 subunits.</text>
</comment>
<comment type="subcellular location">
    <subcellularLocation>
        <location evidence="2">Cytoplasm</location>
    </subcellularLocation>
</comment>
<comment type="similarity">
    <text evidence="4">Belongs to the CRISPR system Cmr1 family.</text>
</comment>
<protein>
    <recommendedName>
        <fullName>CRISPR system Cmr subunit Cmr1-2</fullName>
    </recommendedName>
    <alternativeName>
        <fullName>CRISPR type III-B/RAMP module RAMP protein Cmr1-2</fullName>
    </alternativeName>
</protein>
<evidence type="ECO:0000250" key="1">
    <source>
        <dbReference type="UniProtKB" id="Q8U1S5"/>
    </source>
</evidence>
<evidence type="ECO:0000269" key="2">
    <source>
    </source>
</evidence>
<evidence type="ECO:0000303" key="3">
    <source>
    </source>
</evidence>
<evidence type="ECO:0000305" key="4"/>
<accession>Q8U3V3</accession>
<feature type="chain" id="PRO_0000418071" description="CRISPR system Cmr subunit Cmr1-2">
    <location>
        <begin position="1"/>
        <end position="187"/>
    </location>
</feature>
<keyword id="KW-0051">Antiviral defense</keyword>
<keyword id="KW-0963">Cytoplasm</keyword>
<keyword id="KW-1185">Reference proteome</keyword>
<sequence length="187" mass="21719">MYEAIFDLEAITPLFMRGADARSPEFSSASVKGVMRWWFRALAGGYFGNNIEALKEVEEKIFGSTRNKSRVFVRAEVEDVKKGNIYRQASSWADKTIIVWSEYVDYFFFSVLDKRRNRKTKKIDIKTRFEYFDVGSKFSISLSSTDERYFRLAEASLWMTINLGGFGFRARRGAGSLKVQMLREMLL</sequence>
<proteinExistence type="evidence at protein level"/>
<reference key="1">
    <citation type="journal article" date="1999" name="Genetics">
        <title>Divergence of the hyperthermophilic archaea Pyrococcus furiosus and P. horikoshii inferred from complete genomic sequences.</title>
        <authorList>
            <person name="Maeder D.L."/>
            <person name="Weiss R.B."/>
            <person name="Dunn D.M."/>
            <person name="Cherry J.L."/>
            <person name="Gonzalez J.M."/>
            <person name="DiRuggiero J."/>
            <person name="Robb F.T."/>
        </authorList>
    </citation>
    <scope>NUCLEOTIDE SEQUENCE [LARGE SCALE GENOMIC DNA]</scope>
    <source>
        <strain>ATCC 43587 / DSM 3638 / JCM 8422 / Vc1</strain>
    </source>
</reference>
<reference key="2">
    <citation type="journal article" date="2009" name="Cell">
        <title>RNA-guided RNA cleavage by a CRISPR RNA-Cas protein complex.</title>
        <authorList>
            <person name="Hale C.R."/>
            <person name="Zhao P."/>
            <person name="Olson S."/>
            <person name="Duff M.O."/>
            <person name="Graveley B.R."/>
            <person name="Wells L."/>
            <person name="Terns R.M."/>
            <person name="Terns M.P."/>
        </authorList>
    </citation>
    <scope>IDENTIFICATION BY MASS SPECTROMETRY</scope>
    <scope>FUNCTION IN CMR COMPLEX</scope>
    <scope>SUBCELLULAR LOCATION</scope>
    <scope>SUBUNIT</scope>
    <source>
        <strain>ATCC 43587 / DSM 3638 / JCM 8422 / Vc1</strain>
    </source>
</reference>
<gene>
    <name evidence="3" type="primary">cmr1-2</name>
    <name type="ordered locus">PF0352</name>
</gene>